<name>RPO10_HALWD</name>
<reference key="1">
    <citation type="journal article" date="2006" name="BMC Genomics">
        <title>The genome of the square archaeon Haloquadratum walsbyi: life at the limits of water activity.</title>
        <authorList>
            <person name="Bolhuis H."/>
            <person name="Palm P."/>
            <person name="Wende A."/>
            <person name="Falb M."/>
            <person name="Rampp M."/>
            <person name="Rodriguez-Valera F."/>
            <person name="Pfeiffer F."/>
            <person name="Oesterhelt D."/>
        </authorList>
    </citation>
    <scope>NUCLEOTIDE SEQUENCE [LARGE SCALE GENOMIC DNA]</scope>
    <source>
        <strain>DSM 16790 / HBSQ001</strain>
    </source>
</reference>
<protein>
    <recommendedName>
        <fullName evidence="1">DNA-directed RNA polymerase subunit Rpo10</fullName>
        <ecNumber evidence="1">2.7.7.6</ecNumber>
    </recommendedName>
    <alternativeName>
        <fullName evidence="1">DNA-directed RNA polymerase subunit N</fullName>
    </alternativeName>
</protein>
<gene>
    <name evidence="1" type="primary">rpo10</name>
    <name evidence="1" type="synonym">rpoN</name>
    <name type="ordered locus">HQ_2937A</name>
</gene>
<accession>Q18G60</accession>
<proteinExistence type="inferred from homology"/>
<keyword id="KW-0963">Cytoplasm</keyword>
<keyword id="KW-0240">DNA-directed RNA polymerase</keyword>
<keyword id="KW-0479">Metal-binding</keyword>
<keyword id="KW-0548">Nucleotidyltransferase</keyword>
<keyword id="KW-1185">Reference proteome</keyword>
<keyword id="KW-0804">Transcription</keyword>
<keyword id="KW-0808">Transferase</keyword>
<keyword id="KW-0862">Zinc</keyword>
<dbReference type="EC" id="2.7.7.6" evidence="1"/>
<dbReference type="EMBL" id="AM180088">
    <property type="protein sequence ID" value="CAJ53041.1"/>
    <property type="molecule type" value="Genomic_DNA"/>
</dbReference>
<dbReference type="RefSeq" id="WP_011572151.1">
    <property type="nucleotide sequence ID" value="NC_008212.1"/>
</dbReference>
<dbReference type="SMR" id="Q18G60"/>
<dbReference type="STRING" id="362976.HQ_2937A"/>
<dbReference type="GeneID" id="4194644"/>
<dbReference type="KEGG" id="hwa:HQ_2937A"/>
<dbReference type="eggNOG" id="arCOG04244">
    <property type="taxonomic scope" value="Archaea"/>
</dbReference>
<dbReference type="HOGENOM" id="CLU_143122_1_1_2"/>
<dbReference type="Proteomes" id="UP000001975">
    <property type="component" value="Chromosome"/>
</dbReference>
<dbReference type="GO" id="GO:0005737">
    <property type="term" value="C:cytoplasm"/>
    <property type="evidence" value="ECO:0007669"/>
    <property type="project" value="UniProtKB-SubCell"/>
</dbReference>
<dbReference type="GO" id="GO:0000428">
    <property type="term" value="C:DNA-directed RNA polymerase complex"/>
    <property type="evidence" value="ECO:0007669"/>
    <property type="project" value="UniProtKB-KW"/>
</dbReference>
<dbReference type="GO" id="GO:0003677">
    <property type="term" value="F:DNA binding"/>
    <property type="evidence" value="ECO:0007669"/>
    <property type="project" value="InterPro"/>
</dbReference>
<dbReference type="GO" id="GO:0003899">
    <property type="term" value="F:DNA-directed RNA polymerase activity"/>
    <property type="evidence" value="ECO:0007669"/>
    <property type="project" value="UniProtKB-UniRule"/>
</dbReference>
<dbReference type="GO" id="GO:0008270">
    <property type="term" value="F:zinc ion binding"/>
    <property type="evidence" value="ECO:0007669"/>
    <property type="project" value="UniProtKB-UniRule"/>
</dbReference>
<dbReference type="GO" id="GO:0006351">
    <property type="term" value="P:DNA-templated transcription"/>
    <property type="evidence" value="ECO:0007669"/>
    <property type="project" value="UniProtKB-UniRule"/>
</dbReference>
<dbReference type="FunFam" id="1.10.10.60:FF:000335">
    <property type="entry name" value="DNA-directed RNA polymerase subunit N, putative"/>
    <property type="match status" value="1"/>
</dbReference>
<dbReference type="Gene3D" id="1.10.10.60">
    <property type="entry name" value="Homeodomain-like"/>
    <property type="match status" value="1"/>
</dbReference>
<dbReference type="HAMAP" id="MF_00250">
    <property type="entry name" value="RNApol_arch_Rpo10"/>
    <property type="match status" value="1"/>
</dbReference>
<dbReference type="InterPro" id="IPR023580">
    <property type="entry name" value="RNA_pol_su_RPB10"/>
</dbReference>
<dbReference type="InterPro" id="IPR020789">
    <property type="entry name" value="RNA_pol_suN_Zn-BS"/>
</dbReference>
<dbReference type="InterPro" id="IPR000268">
    <property type="entry name" value="RPABC5/Rpb10"/>
</dbReference>
<dbReference type="NCBIfam" id="NF003089">
    <property type="entry name" value="PRK04016.1"/>
    <property type="match status" value="1"/>
</dbReference>
<dbReference type="PANTHER" id="PTHR23431:SF3">
    <property type="entry name" value="DNA-DIRECTED RNA POLYMERASES I, II, AND III SUBUNIT RPABC5"/>
    <property type="match status" value="1"/>
</dbReference>
<dbReference type="PANTHER" id="PTHR23431">
    <property type="entry name" value="DNA-DIRECTED RNA POLYMERASES I, II, AND III SUBUNIT RPABC5 FAMILY MEMBER"/>
    <property type="match status" value="1"/>
</dbReference>
<dbReference type="Pfam" id="PF01194">
    <property type="entry name" value="RNA_pol_N"/>
    <property type="match status" value="1"/>
</dbReference>
<dbReference type="PIRSF" id="PIRSF005653">
    <property type="entry name" value="RNA_pol_N/8_sub"/>
    <property type="match status" value="1"/>
</dbReference>
<dbReference type="SUPFAM" id="SSF46924">
    <property type="entry name" value="RNA polymerase subunit RPB10"/>
    <property type="match status" value="1"/>
</dbReference>
<dbReference type="PROSITE" id="PS01112">
    <property type="entry name" value="RNA_POL_N_8KD"/>
    <property type="match status" value="1"/>
</dbReference>
<evidence type="ECO:0000255" key="1">
    <source>
        <dbReference type="HAMAP-Rule" id="MF_00250"/>
    </source>
</evidence>
<comment type="function">
    <text evidence="1">DNA-dependent RNA polymerase (RNAP) catalyzes the transcription of DNA into RNA using the four ribonucleoside triphosphates as substrates.</text>
</comment>
<comment type="catalytic activity">
    <reaction evidence="1">
        <text>RNA(n) + a ribonucleoside 5'-triphosphate = RNA(n+1) + diphosphate</text>
        <dbReference type="Rhea" id="RHEA:21248"/>
        <dbReference type="Rhea" id="RHEA-COMP:14527"/>
        <dbReference type="Rhea" id="RHEA-COMP:17342"/>
        <dbReference type="ChEBI" id="CHEBI:33019"/>
        <dbReference type="ChEBI" id="CHEBI:61557"/>
        <dbReference type="ChEBI" id="CHEBI:140395"/>
        <dbReference type="EC" id="2.7.7.6"/>
    </reaction>
</comment>
<comment type="cofactor">
    <cofactor evidence="1">
        <name>Zn(2+)</name>
        <dbReference type="ChEBI" id="CHEBI:29105"/>
    </cofactor>
    <text evidence="1">Binds 1 zinc ion.</text>
</comment>
<comment type="subunit">
    <text evidence="1">Part of the RNA polymerase complex.</text>
</comment>
<comment type="subcellular location">
    <subcellularLocation>
        <location evidence="1">Cytoplasm</location>
    </subcellularLocation>
</comment>
<comment type="similarity">
    <text evidence="1">Belongs to the archaeal Rpo10/eukaryotic RPB10 RNA polymerase subunit family.</text>
</comment>
<organism>
    <name type="scientific">Haloquadratum walsbyi (strain DSM 16790 / HBSQ001)</name>
    <dbReference type="NCBI Taxonomy" id="362976"/>
    <lineage>
        <taxon>Archaea</taxon>
        <taxon>Methanobacteriati</taxon>
        <taxon>Methanobacteriota</taxon>
        <taxon>Stenosarchaea group</taxon>
        <taxon>Halobacteria</taxon>
        <taxon>Halobacteriales</taxon>
        <taxon>Haloferacaceae</taxon>
        <taxon>Haloquadratum</taxon>
    </lineage>
</organism>
<sequence>MMIPVRCFTCGTVIGEHWDEFKQRARDGNEDPGEVLDDLGIKRHCCRRMMVSHRDLVDVVAPYQ</sequence>
<feature type="chain" id="PRO_0000304189" description="DNA-directed RNA polymerase subunit Rpo10">
    <location>
        <begin position="1"/>
        <end position="64"/>
    </location>
</feature>
<feature type="binding site" evidence="1">
    <location>
        <position position="7"/>
    </location>
    <ligand>
        <name>Zn(2+)</name>
        <dbReference type="ChEBI" id="CHEBI:29105"/>
    </ligand>
</feature>
<feature type="binding site" evidence="1">
    <location>
        <position position="10"/>
    </location>
    <ligand>
        <name>Zn(2+)</name>
        <dbReference type="ChEBI" id="CHEBI:29105"/>
    </ligand>
</feature>
<feature type="binding site" evidence="1">
    <location>
        <position position="45"/>
    </location>
    <ligand>
        <name>Zn(2+)</name>
        <dbReference type="ChEBI" id="CHEBI:29105"/>
    </ligand>
</feature>
<feature type="binding site" evidence="1">
    <location>
        <position position="46"/>
    </location>
    <ligand>
        <name>Zn(2+)</name>
        <dbReference type="ChEBI" id="CHEBI:29105"/>
    </ligand>
</feature>